<dbReference type="EC" id="5.3.1.9" evidence="1"/>
<dbReference type="EMBL" id="BX571857">
    <property type="protein sequence ID" value="CAG42607.1"/>
    <property type="molecule type" value="Genomic_DNA"/>
</dbReference>
<dbReference type="RefSeq" id="WP_000148855.1">
    <property type="nucleotide sequence ID" value="NC_002953.3"/>
</dbReference>
<dbReference type="SMR" id="Q6GAW4"/>
<dbReference type="KEGG" id="sas:SAS0832"/>
<dbReference type="HOGENOM" id="CLU_037303_0_1_9"/>
<dbReference type="UniPathway" id="UPA00109">
    <property type="reaction ID" value="UER00181"/>
</dbReference>
<dbReference type="UniPathway" id="UPA00138"/>
<dbReference type="GO" id="GO:0005829">
    <property type="term" value="C:cytosol"/>
    <property type="evidence" value="ECO:0007669"/>
    <property type="project" value="TreeGrafter"/>
</dbReference>
<dbReference type="GO" id="GO:0097367">
    <property type="term" value="F:carbohydrate derivative binding"/>
    <property type="evidence" value="ECO:0007669"/>
    <property type="project" value="InterPro"/>
</dbReference>
<dbReference type="GO" id="GO:0004347">
    <property type="term" value="F:glucose-6-phosphate isomerase activity"/>
    <property type="evidence" value="ECO:0007669"/>
    <property type="project" value="UniProtKB-UniRule"/>
</dbReference>
<dbReference type="GO" id="GO:0048029">
    <property type="term" value="F:monosaccharide binding"/>
    <property type="evidence" value="ECO:0007669"/>
    <property type="project" value="TreeGrafter"/>
</dbReference>
<dbReference type="GO" id="GO:0006094">
    <property type="term" value="P:gluconeogenesis"/>
    <property type="evidence" value="ECO:0007669"/>
    <property type="project" value="UniProtKB-UniRule"/>
</dbReference>
<dbReference type="GO" id="GO:0051156">
    <property type="term" value="P:glucose 6-phosphate metabolic process"/>
    <property type="evidence" value="ECO:0007669"/>
    <property type="project" value="TreeGrafter"/>
</dbReference>
<dbReference type="GO" id="GO:0006096">
    <property type="term" value="P:glycolytic process"/>
    <property type="evidence" value="ECO:0007669"/>
    <property type="project" value="UniProtKB-UniRule"/>
</dbReference>
<dbReference type="CDD" id="cd05015">
    <property type="entry name" value="SIS_PGI_1"/>
    <property type="match status" value="1"/>
</dbReference>
<dbReference type="CDD" id="cd05016">
    <property type="entry name" value="SIS_PGI_2"/>
    <property type="match status" value="1"/>
</dbReference>
<dbReference type="FunFam" id="3.40.50.10490:FF:000015">
    <property type="entry name" value="Glucose-6-phosphate isomerase"/>
    <property type="match status" value="1"/>
</dbReference>
<dbReference type="FunFam" id="3.40.50.10490:FF:000016">
    <property type="entry name" value="Glucose-6-phosphate isomerase"/>
    <property type="match status" value="1"/>
</dbReference>
<dbReference type="Gene3D" id="3.40.50.10490">
    <property type="entry name" value="Glucose-6-phosphate isomerase like protein, domain 1"/>
    <property type="match status" value="3"/>
</dbReference>
<dbReference type="HAMAP" id="MF_00473">
    <property type="entry name" value="G6P_isomerase"/>
    <property type="match status" value="1"/>
</dbReference>
<dbReference type="InterPro" id="IPR001672">
    <property type="entry name" value="G6P_Isomerase"/>
</dbReference>
<dbReference type="InterPro" id="IPR018189">
    <property type="entry name" value="Phosphoglucose_isomerase_CS"/>
</dbReference>
<dbReference type="InterPro" id="IPR046348">
    <property type="entry name" value="SIS_dom_sf"/>
</dbReference>
<dbReference type="InterPro" id="IPR035476">
    <property type="entry name" value="SIS_PGI_1"/>
</dbReference>
<dbReference type="InterPro" id="IPR035482">
    <property type="entry name" value="SIS_PGI_2"/>
</dbReference>
<dbReference type="NCBIfam" id="NF010697">
    <property type="entry name" value="PRK14097.1"/>
    <property type="match status" value="1"/>
</dbReference>
<dbReference type="PANTHER" id="PTHR11469">
    <property type="entry name" value="GLUCOSE-6-PHOSPHATE ISOMERASE"/>
    <property type="match status" value="1"/>
</dbReference>
<dbReference type="PANTHER" id="PTHR11469:SF1">
    <property type="entry name" value="GLUCOSE-6-PHOSPHATE ISOMERASE"/>
    <property type="match status" value="1"/>
</dbReference>
<dbReference type="Pfam" id="PF00342">
    <property type="entry name" value="PGI"/>
    <property type="match status" value="1"/>
</dbReference>
<dbReference type="PRINTS" id="PR00662">
    <property type="entry name" value="G6PISOMERASE"/>
</dbReference>
<dbReference type="SUPFAM" id="SSF53697">
    <property type="entry name" value="SIS domain"/>
    <property type="match status" value="1"/>
</dbReference>
<dbReference type="PROSITE" id="PS00765">
    <property type="entry name" value="P_GLUCOSE_ISOMERASE_1"/>
    <property type="match status" value="1"/>
</dbReference>
<dbReference type="PROSITE" id="PS00174">
    <property type="entry name" value="P_GLUCOSE_ISOMERASE_2"/>
    <property type="match status" value="1"/>
</dbReference>
<dbReference type="PROSITE" id="PS51463">
    <property type="entry name" value="P_GLUCOSE_ISOMERASE_3"/>
    <property type="match status" value="1"/>
</dbReference>
<organism>
    <name type="scientific">Staphylococcus aureus (strain MSSA476)</name>
    <dbReference type="NCBI Taxonomy" id="282459"/>
    <lineage>
        <taxon>Bacteria</taxon>
        <taxon>Bacillati</taxon>
        <taxon>Bacillota</taxon>
        <taxon>Bacilli</taxon>
        <taxon>Bacillales</taxon>
        <taxon>Staphylococcaceae</taxon>
        <taxon>Staphylococcus</taxon>
    </lineage>
</organism>
<name>G6PI_STAAS</name>
<sequence>MTHIQLDFSKTLEFFGEHELKQQQEIVKSIHKTIHEGTGAGSDFLGWVDLPVDYDKEEFSRIVEASKRIKENSDVLVVIGIGGSYLGARAAIEMLTSSFRNSNEYPEIVFVGNHLSSTYTKELVDYLADKDFSVNVISKSGTTTEPAVAFRLFKQLVEERYGKEEAQKRIFATTDKEKGALKQLATNEGYETFIVPDDVGGRYSVLTAVGLLPIATAGINIEAMMIGAAKAREELSSDKLEENIAYQYATIRNILYAKGYTTEMLINYEPSMQYFNEWWKQLFGESEGKDFKGIYPSSANYTTDLHSLGQYVQEGRRFLFETVVKVNHPKYDITIEKDSDDLDGLNYLAGKTIDEVNTKAFEGTLLAHTDGGVPNMVVNIPQLDEETFGYVVYFFELACAMSGYQLGVNPFNQPGVEAYKQNMFALLGKPGFEDLKKELEERL</sequence>
<evidence type="ECO:0000255" key="1">
    <source>
        <dbReference type="HAMAP-Rule" id="MF_00473"/>
    </source>
</evidence>
<comment type="function">
    <text evidence="1">Catalyzes the reversible isomerization of glucose-6-phosphate to fructose-6-phosphate.</text>
</comment>
<comment type="catalytic activity">
    <reaction evidence="1">
        <text>alpha-D-glucose 6-phosphate = beta-D-fructose 6-phosphate</text>
        <dbReference type="Rhea" id="RHEA:11816"/>
        <dbReference type="ChEBI" id="CHEBI:57634"/>
        <dbReference type="ChEBI" id="CHEBI:58225"/>
        <dbReference type="EC" id="5.3.1.9"/>
    </reaction>
</comment>
<comment type="pathway">
    <text evidence="1">Carbohydrate biosynthesis; gluconeogenesis.</text>
</comment>
<comment type="pathway">
    <text evidence="1">Carbohydrate degradation; glycolysis; D-glyceraldehyde 3-phosphate and glycerone phosphate from D-glucose: step 2/4.</text>
</comment>
<comment type="subcellular location">
    <subcellularLocation>
        <location evidence="1">Cytoplasm</location>
    </subcellularLocation>
</comment>
<comment type="similarity">
    <text evidence="1">Belongs to the GPI family.</text>
</comment>
<gene>
    <name evidence="1" type="primary">pgi</name>
    <name type="ordered locus">SAS0832</name>
</gene>
<protein>
    <recommendedName>
        <fullName evidence="1">Glucose-6-phosphate isomerase</fullName>
        <shortName evidence="1">GPI</shortName>
        <ecNumber evidence="1">5.3.1.9</ecNumber>
    </recommendedName>
    <alternativeName>
        <fullName evidence="1">Phosphoglucose isomerase</fullName>
        <shortName evidence="1">PGI</shortName>
    </alternativeName>
    <alternativeName>
        <fullName evidence="1">Phosphohexose isomerase</fullName>
        <shortName evidence="1">PHI</shortName>
    </alternativeName>
</protein>
<feature type="chain" id="PRO_0000180728" description="Glucose-6-phosphate isomerase">
    <location>
        <begin position="1"/>
        <end position="443"/>
    </location>
</feature>
<feature type="active site" description="Proton donor" evidence="1">
    <location>
        <position position="285"/>
    </location>
</feature>
<feature type="active site" evidence="1">
    <location>
        <position position="306"/>
    </location>
</feature>
<feature type="active site" evidence="1">
    <location>
        <position position="420"/>
    </location>
</feature>
<reference key="1">
    <citation type="journal article" date="2004" name="Proc. Natl. Acad. Sci. U.S.A.">
        <title>Complete genomes of two clinical Staphylococcus aureus strains: evidence for the rapid evolution of virulence and drug resistance.</title>
        <authorList>
            <person name="Holden M.T.G."/>
            <person name="Feil E.J."/>
            <person name="Lindsay J.A."/>
            <person name="Peacock S.J."/>
            <person name="Day N.P.J."/>
            <person name="Enright M.C."/>
            <person name="Foster T.J."/>
            <person name="Moore C.E."/>
            <person name="Hurst L."/>
            <person name="Atkin R."/>
            <person name="Barron A."/>
            <person name="Bason N."/>
            <person name="Bentley S.D."/>
            <person name="Chillingworth C."/>
            <person name="Chillingworth T."/>
            <person name="Churcher C."/>
            <person name="Clark L."/>
            <person name="Corton C."/>
            <person name="Cronin A."/>
            <person name="Doggett J."/>
            <person name="Dowd L."/>
            <person name="Feltwell T."/>
            <person name="Hance Z."/>
            <person name="Harris B."/>
            <person name="Hauser H."/>
            <person name="Holroyd S."/>
            <person name="Jagels K."/>
            <person name="James K.D."/>
            <person name="Lennard N."/>
            <person name="Line A."/>
            <person name="Mayes R."/>
            <person name="Moule S."/>
            <person name="Mungall K."/>
            <person name="Ormond D."/>
            <person name="Quail M.A."/>
            <person name="Rabbinowitsch E."/>
            <person name="Rutherford K.M."/>
            <person name="Sanders M."/>
            <person name="Sharp S."/>
            <person name="Simmonds M."/>
            <person name="Stevens K."/>
            <person name="Whitehead S."/>
            <person name="Barrell B.G."/>
            <person name="Spratt B.G."/>
            <person name="Parkhill J."/>
        </authorList>
    </citation>
    <scope>NUCLEOTIDE SEQUENCE [LARGE SCALE GENOMIC DNA]</scope>
    <source>
        <strain>MSSA476</strain>
    </source>
</reference>
<accession>Q6GAW4</accession>
<keyword id="KW-0963">Cytoplasm</keyword>
<keyword id="KW-0312">Gluconeogenesis</keyword>
<keyword id="KW-0324">Glycolysis</keyword>
<keyword id="KW-0413">Isomerase</keyword>
<proteinExistence type="inferred from homology"/>